<reference key="1">
    <citation type="journal article" date="1998" name="J. Exp. Med.">
        <title>Expression of the Elm1 gene, a novel gene of the CCN (connective tissue growth factor, Cyr61/Cef10, and neuroblastoma overexpressed gene) family, suppresses In vivo tumor growth and metastasis of K-1735 murine melanoma cells.</title>
        <authorList>
            <person name="Hashimoto Y."/>
            <person name="Shindo-Okada N."/>
            <person name="Tani M."/>
            <person name="Nagamachi Y."/>
            <person name="Takeuchi K."/>
            <person name="Shiroishi T."/>
            <person name="Toma H."/>
            <person name="Yokota J."/>
        </authorList>
    </citation>
    <scope>NUCLEOTIDE SEQUENCE [MRNA]</scope>
    <source>
        <strain>HeN</strain>
    </source>
</reference>
<reference key="2">
    <citation type="journal article" date="1998" name="Proc. Natl. Acad. Sci. U.S.A.">
        <title>WISP genes are members of the connective tissue growth factor family that are up-regulated in wnt-1-transformed cells and aberrantly expressed in human colon tumors.</title>
        <authorList>
            <person name="Pennica D."/>
            <person name="Swanson T.A."/>
            <person name="Welsh J.W."/>
            <person name="Roy M.A."/>
            <person name="Lawrence D.A."/>
            <person name="Lee J."/>
            <person name="Brush J."/>
            <person name="Taneyhill L.A."/>
            <person name="Deuel B."/>
            <person name="Lew M."/>
            <person name="Watanabe C."/>
            <person name="Cohen R.L."/>
            <person name="Melham M.F."/>
            <person name="Finley G.G."/>
            <person name="Quirke P."/>
            <person name="Goddard A.D."/>
            <person name="Hillan K.J."/>
            <person name="Gurney A.L."/>
            <person name="Botstein D."/>
            <person name="Levine A.J."/>
        </authorList>
    </citation>
    <scope>NUCLEOTIDE SEQUENCE [MRNA]</scope>
    <source>
        <tissue>Mammary gland</tissue>
    </source>
</reference>
<reference key="3">
    <citation type="journal article" date="2004" name="Genome Res.">
        <title>The status, quality, and expansion of the NIH full-length cDNA project: the Mammalian Gene Collection (MGC).</title>
        <authorList>
            <consortium name="The MGC Project Team"/>
        </authorList>
    </citation>
    <scope>NUCLEOTIDE SEQUENCE [LARGE SCALE MRNA]</scope>
    <source>
        <strain>C3H/HeN</strain>
        <strain>FVB/N</strain>
        <tissue>Colon</tissue>
        <tissue>Mesenchymal cell</tissue>
    </source>
</reference>
<feature type="signal peptide" evidence="2">
    <location>
        <begin position="1"/>
        <end position="22"/>
    </location>
</feature>
<feature type="chain" id="PRO_0000014407" description="CCN family member 4">
    <location>
        <begin position="23"/>
        <end position="367"/>
    </location>
</feature>
<feature type="domain" description="IGFBP N-terminal" evidence="6">
    <location>
        <begin position="45"/>
        <end position="118"/>
    </location>
</feature>
<feature type="domain" description="VWFC" evidence="5">
    <location>
        <begin position="121"/>
        <end position="186"/>
    </location>
</feature>
<feature type="domain" description="TSP type-1" evidence="4">
    <location>
        <begin position="215"/>
        <end position="260"/>
    </location>
</feature>
<feature type="domain" description="CTCK" evidence="3">
    <location>
        <begin position="273"/>
        <end position="347"/>
    </location>
</feature>
<feature type="glycosylation site" description="N-linked (GlcNAc...) asparagine" evidence="2">
    <location>
        <position position="86"/>
    </location>
</feature>
<feature type="glycosylation site" description="N-linked (GlcNAc...) asparagine" evidence="2">
    <location>
        <position position="143"/>
    </location>
</feature>
<feature type="glycosylation site" description="N-linked (GlcNAc...) asparagine" evidence="2">
    <location>
        <position position="284"/>
    </location>
</feature>
<feature type="glycosylation site" description="N-linked (GlcNAc...) asparagine" evidence="2">
    <location>
        <position position="343"/>
    </location>
</feature>
<feature type="disulfide bond" evidence="6">
    <location>
        <begin position="49"/>
        <end position="73"/>
    </location>
</feature>
<feature type="disulfide bond" evidence="6">
    <location>
        <begin position="53"/>
        <end position="75"/>
    </location>
</feature>
<feature type="disulfide bond" evidence="6">
    <location>
        <begin position="55"/>
        <end position="76"/>
    </location>
</feature>
<feature type="disulfide bond" evidence="6">
    <location>
        <begin position="62"/>
        <end position="79"/>
    </location>
</feature>
<feature type="disulfide bond" evidence="6">
    <location>
        <begin position="87"/>
        <end position="101"/>
    </location>
</feature>
<feature type="disulfide bond" evidence="6">
    <location>
        <begin position="93"/>
        <end position="115"/>
    </location>
</feature>
<feature type="disulfide bond" evidence="1">
    <location>
        <begin position="273"/>
        <end position="310"/>
    </location>
</feature>
<feature type="disulfide bond" evidence="1">
    <location>
        <begin position="290"/>
        <end position="324"/>
    </location>
</feature>
<feature type="disulfide bond" evidence="1">
    <location>
        <begin position="301"/>
        <end position="340"/>
    </location>
</feature>
<feature type="disulfide bond" evidence="1">
    <location>
        <begin position="304"/>
        <end position="342"/>
    </location>
</feature>
<feature type="disulfide bond" evidence="1">
    <location>
        <begin position="309"/>
        <end position="346"/>
    </location>
</feature>
<feature type="sequence conflict" description="In Ref. 3; AAH52677." evidence="7" ref="3">
    <original>C</original>
    <variation>R</variation>
    <location>
        <position position="79"/>
    </location>
</feature>
<feature type="sequence conflict" description="In Ref. 3; AAH52677." evidence="7" ref="3">
    <original>D</original>
    <variation>G</variation>
    <location>
        <position position="199"/>
    </location>
</feature>
<feature type="sequence conflict" description="In Ref. 3; AAH52677." evidence="7" ref="3">
    <original>K</original>
    <variation>R</variation>
    <location>
        <position position="316"/>
    </location>
</feature>
<feature type="sequence conflict" description="In Ref. 3; AAH52677." evidence="7" ref="3">
    <original>E</original>
    <variation>G</variation>
    <location>
        <position position="363"/>
    </location>
</feature>
<comment type="function">
    <text evidence="1">Downstream regulator in the Wnt/Frizzled-signaling pathway (By similarity). Associated with cell survival. Adheres to skin and melanoma fibroblasts (By similarity). In vitro binding to skin fibroblasts occurs through the proteoglycans, decorin and biglycan (By similarity). Suppresses tumor growth in vivo.</text>
</comment>
<comment type="subcellular location">
    <subcellularLocation>
        <location evidence="1">Secreted</location>
    </subcellularLocation>
</comment>
<comment type="tissue specificity">
    <text>Highly expressed in kidney and lung. Lower levels in heart, brain, spleen, liver, skeletal muscle and testis. Expressed in low metastatic melanoma cells.</text>
</comment>
<comment type="similarity">
    <text evidence="7">Belongs to the CCN family.</text>
</comment>
<name>CCN4_MOUSE</name>
<keyword id="KW-0130">Cell adhesion</keyword>
<keyword id="KW-1015">Disulfide bond</keyword>
<keyword id="KW-0325">Glycoprotein</keyword>
<keyword id="KW-0656">Proto-oncogene</keyword>
<keyword id="KW-1185">Reference proteome</keyword>
<keyword id="KW-0964">Secreted</keyword>
<keyword id="KW-0732">Signal</keyword>
<keyword id="KW-0879">Wnt signaling pathway</keyword>
<evidence type="ECO:0000250" key="1"/>
<evidence type="ECO:0000255" key="2"/>
<evidence type="ECO:0000255" key="3">
    <source>
        <dbReference type="PROSITE-ProRule" id="PRU00039"/>
    </source>
</evidence>
<evidence type="ECO:0000255" key="4">
    <source>
        <dbReference type="PROSITE-ProRule" id="PRU00210"/>
    </source>
</evidence>
<evidence type="ECO:0000255" key="5">
    <source>
        <dbReference type="PROSITE-ProRule" id="PRU00220"/>
    </source>
</evidence>
<evidence type="ECO:0000255" key="6">
    <source>
        <dbReference type="PROSITE-ProRule" id="PRU00653"/>
    </source>
</evidence>
<evidence type="ECO:0000305" key="7"/>
<proteinExistence type="evidence at transcript level"/>
<gene>
    <name type="primary">Ccn4</name>
    <name type="synonym">Elm1</name>
    <name type="synonym">Wisp1</name>
</gene>
<dbReference type="EMBL" id="AB004873">
    <property type="protein sequence ID" value="BAA24949.1"/>
    <property type="molecule type" value="mRNA"/>
</dbReference>
<dbReference type="EMBL" id="AF100777">
    <property type="protein sequence ID" value="AAC96319.1"/>
    <property type="molecule type" value="mRNA"/>
</dbReference>
<dbReference type="EMBL" id="BC048791">
    <property type="protein sequence ID" value="AAH48791.1"/>
    <property type="molecule type" value="mRNA"/>
</dbReference>
<dbReference type="EMBL" id="BC052677">
    <property type="protein sequence ID" value="AAH52677.1"/>
    <property type="molecule type" value="mRNA"/>
</dbReference>
<dbReference type="CCDS" id="CCDS27510.1"/>
<dbReference type="RefSeq" id="NP_061353.1">
    <property type="nucleotide sequence ID" value="NM_018865.4"/>
</dbReference>
<dbReference type="SMR" id="O54775"/>
<dbReference type="BioGRID" id="204561">
    <property type="interactions" value="1"/>
</dbReference>
<dbReference type="FunCoup" id="O54775">
    <property type="interactions" value="331"/>
</dbReference>
<dbReference type="STRING" id="10090.ENSMUSP00000005255"/>
<dbReference type="GlyCosmos" id="O54775">
    <property type="glycosylation" value="4 sites, No reported glycans"/>
</dbReference>
<dbReference type="GlyGen" id="O54775">
    <property type="glycosylation" value="5 sites"/>
</dbReference>
<dbReference type="PhosphoSitePlus" id="O54775"/>
<dbReference type="jPOST" id="O54775"/>
<dbReference type="PaxDb" id="10090-ENSMUSP00000005255"/>
<dbReference type="PeptideAtlas" id="O54775"/>
<dbReference type="ProteomicsDB" id="297849"/>
<dbReference type="Pumba" id="O54775"/>
<dbReference type="Antibodypedia" id="1567">
    <property type="antibodies" value="335 antibodies from 34 providers"/>
</dbReference>
<dbReference type="DNASU" id="22402"/>
<dbReference type="Ensembl" id="ENSMUST00000005255.9">
    <property type="protein sequence ID" value="ENSMUSP00000005255.3"/>
    <property type="gene ID" value="ENSMUSG00000005124.11"/>
</dbReference>
<dbReference type="GeneID" id="22402"/>
<dbReference type="KEGG" id="mmu:22402"/>
<dbReference type="UCSC" id="uc007wau.1">
    <property type="organism name" value="mouse"/>
</dbReference>
<dbReference type="AGR" id="MGI:1197008"/>
<dbReference type="CTD" id="8840"/>
<dbReference type="MGI" id="MGI:1197008">
    <property type="gene designation" value="Ccn4"/>
</dbReference>
<dbReference type="VEuPathDB" id="HostDB:ENSMUSG00000005124"/>
<dbReference type="eggNOG" id="ENOG502QQQQ">
    <property type="taxonomic scope" value="Eukaryota"/>
</dbReference>
<dbReference type="GeneTree" id="ENSGT00940000158587"/>
<dbReference type="HOGENOM" id="CLU_063247_3_1_1"/>
<dbReference type="InParanoid" id="O54775"/>
<dbReference type="OMA" id="RKIMWIN"/>
<dbReference type="OrthoDB" id="365605at2759"/>
<dbReference type="PhylomeDB" id="O54775"/>
<dbReference type="TreeFam" id="TF326070"/>
<dbReference type="BioGRID-ORCS" id="22402">
    <property type="hits" value="2 hits in 78 CRISPR screens"/>
</dbReference>
<dbReference type="ChiTaRS" id="Wisp1">
    <property type="organism name" value="mouse"/>
</dbReference>
<dbReference type="PRO" id="PR:O54775"/>
<dbReference type="Proteomes" id="UP000000589">
    <property type="component" value="Chromosome 15"/>
</dbReference>
<dbReference type="RNAct" id="O54775">
    <property type="molecule type" value="protein"/>
</dbReference>
<dbReference type="Bgee" id="ENSMUSG00000005124">
    <property type="expression patterns" value="Expressed in molar tooth and 207 other cell types or tissues"/>
</dbReference>
<dbReference type="ExpressionAtlas" id="O54775">
    <property type="expression patterns" value="baseline and differential"/>
</dbReference>
<dbReference type="GO" id="GO:0005737">
    <property type="term" value="C:cytoplasm"/>
    <property type="evidence" value="ECO:0000315"/>
    <property type="project" value="UniProtKB"/>
</dbReference>
<dbReference type="GO" id="GO:0005829">
    <property type="term" value="C:cytosol"/>
    <property type="evidence" value="ECO:0007669"/>
    <property type="project" value="Ensembl"/>
</dbReference>
<dbReference type="GO" id="GO:0005615">
    <property type="term" value="C:extracellular space"/>
    <property type="evidence" value="ECO:0007005"/>
    <property type="project" value="BHF-UCL"/>
</dbReference>
<dbReference type="GO" id="GO:0060348">
    <property type="term" value="P:bone development"/>
    <property type="evidence" value="ECO:0000315"/>
    <property type="project" value="UniProtKB"/>
</dbReference>
<dbReference type="GO" id="GO:0007155">
    <property type="term" value="P:cell adhesion"/>
    <property type="evidence" value="ECO:0007669"/>
    <property type="project" value="UniProtKB-KW"/>
</dbReference>
<dbReference type="GO" id="GO:0042593">
    <property type="term" value="P:glucose homeostasis"/>
    <property type="evidence" value="ECO:0000315"/>
    <property type="project" value="UniProtKB"/>
</dbReference>
<dbReference type="GO" id="GO:0032331">
    <property type="term" value="P:negative regulation of chondrocyte differentiation"/>
    <property type="evidence" value="ECO:0000315"/>
    <property type="project" value="UniProtKB"/>
</dbReference>
<dbReference type="GO" id="GO:0045599">
    <property type="term" value="P:negative regulation of fat cell differentiation"/>
    <property type="evidence" value="ECO:0000314"/>
    <property type="project" value="UniProtKB"/>
</dbReference>
<dbReference type="GO" id="GO:0001649">
    <property type="term" value="P:osteoblast differentiation"/>
    <property type="evidence" value="ECO:0000315"/>
    <property type="project" value="UniProtKB"/>
</dbReference>
<dbReference type="GO" id="GO:0030316">
    <property type="term" value="P:osteoclast differentiation"/>
    <property type="evidence" value="ECO:0000315"/>
    <property type="project" value="UniProtKB"/>
</dbReference>
<dbReference type="GO" id="GO:0050729">
    <property type="term" value="P:positive regulation of inflammatory response"/>
    <property type="evidence" value="ECO:0007669"/>
    <property type="project" value="Ensembl"/>
</dbReference>
<dbReference type="GO" id="GO:0045669">
    <property type="term" value="P:positive regulation of osteoblast differentiation"/>
    <property type="evidence" value="ECO:0007669"/>
    <property type="project" value="Ensembl"/>
</dbReference>
<dbReference type="GO" id="GO:0014911">
    <property type="term" value="P:positive regulation of smooth muscle cell migration"/>
    <property type="evidence" value="ECO:0000250"/>
    <property type="project" value="UniProtKB"/>
</dbReference>
<dbReference type="GO" id="GO:0048661">
    <property type="term" value="P:positive regulation of smooth muscle cell proliferation"/>
    <property type="evidence" value="ECO:0000250"/>
    <property type="project" value="UniProtKB"/>
</dbReference>
<dbReference type="GO" id="GO:0030177">
    <property type="term" value="P:positive regulation of Wnt signaling pathway"/>
    <property type="evidence" value="ECO:0000315"/>
    <property type="project" value="UniProtKB"/>
</dbReference>
<dbReference type="GO" id="GO:0090303">
    <property type="term" value="P:positive regulation of wound healing"/>
    <property type="evidence" value="ECO:0000315"/>
    <property type="project" value="UniProtKB"/>
</dbReference>
<dbReference type="GO" id="GO:0001817">
    <property type="term" value="P:regulation of cytokine production"/>
    <property type="evidence" value="ECO:0007669"/>
    <property type="project" value="Ensembl"/>
</dbReference>
<dbReference type="GO" id="GO:0016055">
    <property type="term" value="P:Wnt signaling pathway"/>
    <property type="evidence" value="ECO:0007669"/>
    <property type="project" value="UniProtKB-KW"/>
</dbReference>
<dbReference type="FunFam" id="2.20.100.10:FF:000069">
    <property type="entry name" value="Cellular communication network factor 4"/>
    <property type="match status" value="1"/>
</dbReference>
<dbReference type="Gene3D" id="2.10.70.10">
    <property type="entry name" value="Complement Module, domain 1"/>
    <property type="match status" value="1"/>
</dbReference>
<dbReference type="Gene3D" id="2.20.100.10">
    <property type="entry name" value="Thrombospondin type-1 (TSP1) repeat"/>
    <property type="match status" value="1"/>
</dbReference>
<dbReference type="InterPro" id="IPR050941">
    <property type="entry name" value="CCN"/>
</dbReference>
<dbReference type="InterPro" id="IPR006207">
    <property type="entry name" value="Cys_knot_C"/>
</dbReference>
<dbReference type="InterPro" id="IPR006208">
    <property type="entry name" value="Glyco_hormone_CN"/>
</dbReference>
<dbReference type="InterPro" id="IPR009030">
    <property type="entry name" value="Growth_fac_rcpt_cys_sf"/>
</dbReference>
<dbReference type="InterPro" id="IPR000867">
    <property type="entry name" value="IGFBP-like"/>
</dbReference>
<dbReference type="InterPro" id="IPR012395">
    <property type="entry name" value="IGFBP_CNN"/>
</dbReference>
<dbReference type="InterPro" id="IPR017891">
    <property type="entry name" value="Insulin_GF-bd_Cys-rich_CS"/>
</dbReference>
<dbReference type="InterPro" id="IPR043973">
    <property type="entry name" value="TSP1_CCN"/>
</dbReference>
<dbReference type="InterPro" id="IPR000884">
    <property type="entry name" value="TSP1_rpt"/>
</dbReference>
<dbReference type="InterPro" id="IPR036383">
    <property type="entry name" value="TSP1_rpt_sf"/>
</dbReference>
<dbReference type="InterPro" id="IPR001007">
    <property type="entry name" value="VWF_dom"/>
</dbReference>
<dbReference type="PANTHER" id="PTHR11348:SF4">
    <property type="entry name" value="CCN FAMILY MEMBER 4"/>
    <property type="match status" value="1"/>
</dbReference>
<dbReference type="PANTHER" id="PTHR11348">
    <property type="entry name" value="CONNECTIVE TISSUE GROWTH FACTOR-RELATED"/>
    <property type="match status" value="1"/>
</dbReference>
<dbReference type="Pfam" id="PF00007">
    <property type="entry name" value="Cys_knot"/>
    <property type="match status" value="1"/>
</dbReference>
<dbReference type="Pfam" id="PF00219">
    <property type="entry name" value="IGFBP"/>
    <property type="match status" value="1"/>
</dbReference>
<dbReference type="Pfam" id="PF19035">
    <property type="entry name" value="TSP1_CCN"/>
    <property type="match status" value="1"/>
</dbReference>
<dbReference type="Pfam" id="PF00093">
    <property type="entry name" value="VWC"/>
    <property type="match status" value="1"/>
</dbReference>
<dbReference type="PIRSF" id="PIRSF036495">
    <property type="entry name" value="IGFBP_rP_CNN"/>
    <property type="match status" value="1"/>
</dbReference>
<dbReference type="SMART" id="SM00041">
    <property type="entry name" value="CT"/>
    <property type="match status" value="1"/>
</dbReference>
<dbReference type="SMART" id="SM00121">
    <property type="entry name" value="IB"/>
    <property type="match status" value="1"/>
</dbReference>
<dbReference type="SMART" id="SM00209">
    <property type="entry name" value="TSP1"/>
    <property type="match status" value="1"/>
</dbReference>
<dbReference type="SMART" id="SM00214">
    <property type="entry name" value="VWC"/>
    <property type="match status" value="1"/>
</dbReference>
<dbReference type="SUPFAM" id="SSF57603">
    <property type="entry name" value="FnI-like domain"/>
    <property type="match status" value="1"/>
</dbReference>
<dbReference type="SUPFAM" id="SSF57184">
    <property type="entry name" value="Growth factor receptor domain"/>
    <property type="match status" value="1"/>
</dbReference>
<dbReference type="SUPFAM" id="SSF82895">
    <property type="entry name" value="TSP-1 type 1 repeat"/>
    <property type="match status" value="1"/>
</dbReference>
<dbReference type="PROSITE" id="PS01185">
    <property type="entry name" value="CTCK_1"/>
    <property type="match status" value="1"/>
</dbReference>
<dbReference type="PROSITE" id="PS01225">
    <property type="entry name" value="CTCK_2"/>
    <property type="match status" value="1"/>
</dbReference>
<dbReference type="PROSITE" id="PS00222">
    <property type="entry name" value="IGFBP_N_1"/>
    <property type="match status" value="1"/>
</dbReference>
<dbReference type="PROSITE" id="PS51323">
    <property type="entry name" value="IGFBP_N_2"/>
    <property type="match status" value="1"/>
</dbReference>
<dbReference type="PROSITE" id="PS50092">
    <property type="entry name" value="TSP1"/>
    <property type="match status" value="1"/>
</dbReference>
<dbReference type="PROSITE" id="PS01208">
    <property type="entry name" value="VWFC_1"/>
    <property type="match status" value="1"/>
</dbReference>
<dbReference type="PROSITE" id="PS50184">
    <property type="entry name" value="VWFC_2"/>
    <property type="match status" value="1"/>
</dbReference>
<organism>
    <name type="scientific">Mus musculus</name>
    <name type="common">Mouse</name>
    <dbReference type="NCBI Taxonomy" id="10090"/>
    <lineage>
        <taxon>Eukaryota</taxon>
        <taxon>Metazoa</taxon>
        <taxon>Chordata</taxon>
        <taxon>Craniata</taxon>
        <taxon>Vertebrata</taxon>
        <taxon>Euteleostomi</taxon>
        <taxon>Mammalia</taxon>
        <taxon>Eutheria</taxon>
        <taxon>Euarchontoglires</taxon>
        <taxon>Glires</taxon>
        <taxon>Rodentia</taxon>
        <taxon>Myomorpha</taxon>
        <taxon>Muroidea</taxon>
        <taxon>Muridae</taxon>
        <taxon>Murinae</taxon>
        <taxon>Mus</taxon>
        <taxon>Mus</taxon>
    </lineage>
</organism>
<accession>O54775</accession>
<accession>Q80ZL1</accession>
<sequence>MRWLLPWTLAAVAVLRVGNILATALSPTPTTMTFTPAPLEETTTRPEFCKWPCECPQSPPRCPLGVSLITDGCECCKICAQQLGDNCTEAAICDPHRGLYCDYSGDRPRYAIGVCAQVVGVGCVLDGVRYTNGESFQPNCRYNCTCIDGTVGCTPLCLSPRPPRLWCRQPRHVRVPGQCCEQWVCDDDARRPRQTALLDTRAFAASGAVEQRYENCIAYTSPWSPCSTTCGLGISTRISNVNARCWPEQESRLCNLRPCDVDIQLHIKAGKKCLAVYQPEEATNFTLAGCVSTRTYRPKYCGVCTDNRCCIPYKSKTISVDFQCPEGPGFSRQVLWINACFCNLSCRNPNDIFADLESYPDFEEIAN</sequence>
<protein>
    <recommendedName>
        <fullName evidence="7">CCN family member 4</fullName>
    </recommendedName>
    <alternativeName>
        <fullName>ELM-1</fullName>
    </alternativeName>
    <alternativeName>
        <fullName>WNT1-inducible-signaling pathway protein 1</fullName>
        <shortName>WISP-1</shortName>
    </alternativeName>
</protein>